<feature type="chain" id="PRO_0000335551" description="UPF0182 protein Strop_3729">
    <location>
        <begin position="1"/>
        <end position="994"/>
    </location>
</feature>
<feature type="transmembrane region" description="Helical" evidence="1">
    <location>
        <begin position="18"/>
        <end position="38"/>
    </location>
</feature>
<feature type="transmembrane region" description="Helical" evidence="1">
    <location>
        <begin position="61"/>
        <end position="81"/>
    </location>
</feature>
<feature type="transmembrane region" description="Helical" evidence="1">
    <location>
        <begin position="110"/>
        <end position="130"/>
    </location>
</feature>
<feature type="transmembrane region" description="Helical" evidence="1">
    <location>
        <begin position="174"/>
        <end position="194"/>
    </location>
</feature>
<feature type="transmembrane region" description="Helical" evidence="1">
    <location>
        <begin position="209"/>
        <end position="229"/>
    </location>
</feature>
<feature type="transmembrane region" description="Helical" evidence="1">
    <location>
        <begin position="260"/>
        <end position="280"/>
    </location>
</feature>
<feature type="transmembrane region" description="Helical" evidence="1">
    <location>
        <begin position="283"/>
        <end position="303"/>
    </location>
</feature>
<feature type="region of interest" description="Disordered" evidence="2">
    <location>
        <begin position="891"/>
        <end position="934"/>
    </location>
</feature>
<feature type="region of interest" description="Disordered" evidence="2">
    <location>
        <begin position="970"/>
        <end position="994"/>
    </location>
</feature>
<feature type="compositionally biased region" description="Pro residues" evidence="2">
    <location>
        <begin position="897"/>
        <end position="926"/>
    </location>
</feature>
<dbReference type="EMBL" id="CP000667">
    <property type="protein sequence ID" value="ABP56160.1"/>
    <property type="molecule type" value="Genomic_DNA"/>
</dbReference>
<dbReference type="RefSeq" id="WP_012014935.1">
    <property type="nucleotide sequence ID" value="NC_009380.1"/>
</dbReference>
<dbReference type="SMR" id="A4XB61"/>
<dbReference type="STRING" id="369723.Strop_3729"/>
<dbReference type="KEGG" id="stp:Strop_3729"/>
<dbReference type="eggNOG" id="COG1615">
    <property type="taxonomic scope" value="Bacteria"/>
</dbReference>
<dbReference type="HOGENOM" id="CLU_007733_1_0_11"/>
<dbReference type="Proteomes" id="UP000000235">
    <property type="component" value="Chromosome"/>
</dbReference>
<dbReference type="GO" id="GO:0005576">
    <property type="term" value="C:extracellular region"/>
    <property type="evidence" value="ECO:0007669"/>
    <property type="project" value="TreeGrafter"/>
</dbReference>
<dbReference type="GO" id="GO:0005886">
    <property type="term" value="C:plasma membrane"/>
    <property type="evidence" value="ECO:0007669"/>
    <property type="project" value="UniProtKB-SubCell"/>
</dbReference>
<dbReference type="HAMAP" id="MF_01600">
    <property type="entry name" value="UPF0182"/>
    <property type="match status" value="1"/>
</dbReference>
<dbReference type="InterPro" id="IPR005372">
    <property type="entry name" value="UPF0182"/>
</dbReference>
<dbReference type="NCBIfam" id="NF000825">
    <property type="entry name" value="PRK00068.1"/>
    <property type="match status" value="1"/>
</dbReference>
<dbReference type="PANTHER" id="PTHR39344">
    <property type="entry name" value="UPF0182 PROTEIN SLL1060"/>
    <property type="match status" value="1"/>
</dbReference>
<dbReference type="PANTHER" id="PTHR39344:SF1">
    <property type="entry name" value="UPF0182 PROTEIN SLL1060"/>
    <property type="match status" value="1"/>
</dbReference>
<dbReference type="Pfam" id="PF03699">
    <property type="entry name" value="UPF0182"/>
    <property type="match status" value="1"/>
</dbReference>
<proteinExistence type="inferred from homology"/>
<keyword id="KW-1003">Cell membrane</keyword>
<keyword id="KW-0472">Membrane</keyword>
<keyword id="KW-1185">Reference proteome</keyword>
<keyword id="KW-0812">Transmembrane</keyword>
<keyword id="KW-1133">Transmembrane helix</keyword>
<accession>A4XB61</accession>
<evidence type="ECO:0000255" key="1">
    <source>
        <dbReference type="HAMAP-Rule" id="MF_01600"/>
    </source>
</evidence>
<evidence type="ECO:0000256" key="2">
    <source>
        <dbReference type="SAM" id="MobiDB-lite"/>
    </source>
</evidence>
<name>Y3729_SALTO</name>
<comment type="subcellular location">
    <subcellularLocation>
        <location evidence="1">Cell membrane</location>
        <topology evidence="1">Multi-pass membrane protein</topology>
    </subcellularLocation>
</comment>
<comment type="similarity">
    <text evidence="1">Belongs to the UPF0182 family.</text>
</comment>
<gene>
    <name type="ordered locus">Strop_3729</name>
</gene>
<organism>
    <name type="scientific">Salinispora tropica (strain ATCC BAA-916 / DSM 44818 / JCM 13857 / NBRC 105044 / CNB-440)</name>
    <dbReference type="NCBI Taxonomy" id="369723"/>
    <lineage>
        <taxon>Bacteria</taxon>
        <taxon>Bacillati</taxon>
        <taxon>Actinomycetota</taxon>
        <taxon>Actinomycetes</taxon>
        <taxon>Micromonosporales</taxon>
        <taxon>Micromonosporaceae</taxon>
        <taxon>Salinispora</taxon>
    </lineage>
</organism>
<sequence>MRSSAPMPRMSRRGRVTIGVLVGVFVLFTLLGWGVQAWTDWLWFGEVDYTAVFSGVLVTRLLLFVTVGLAMAVIVGGNLWLAHRLRPRLRPQSPEQATLERYRMLLSPRIGLWFATVSVVVGLFAGLSAQSRWSEWLLFRNGGNFGVKDPEFGVDIGFYIFDLPFWRYLLGTAFTAVVLALLGALAVHYVFGGIRLQGVGDRMSTAARAHLSTLVAVFVLLKAVAYVLDRRTMLLEYNDGANVYGAGYADINALLPAKEILAYISVVVAIAVLVFSNAWMRNLVWPGISLALLGVSAVAIGGIYPWAVQTFEVKPSARDKEARYIERSIEATRAAFSLGEADATRYAASNLQPPASLATDTAVVPNARLLDPQLVSETYTQLQQVRGFYDFGPKLDIDRYTVDGETQDYVVGVREINYGELTTQQSNWINRHTVYTHGYGLVAAPANRVVCGGQPYFVSGFLGERSQEGCAAQTDQIPASQPRIYYGERMEAGDYAIVGKANPEASPAEFDRPVGEDGSESYYTYTGSGGVEVGSFGRRLLYAIKEQESNFLLSEAVNEKSKLLYVRNPRERVEKVAPFLTVDGDPYPAVIDGRVTWIIDGYTTAATYPYAERINLQTETTDELTNRGTFQQARENINYIRNSVKATVDAYDGTVTLYEFDDGDPVLRAWNKAFGGDLIKPKAEIPTELSAHFRYPADLFKVQRNVYTRFHVTNPGDFYSGQDFWQVPNVPDAPDSGQKQPPYYLFTQMPGQDEPRFQLTSAVTPNRRQNLAALMSGSYVDGKPRLEVYELPEDTRISGPVQVHQQMTNNAQIRQQLNLLSSNQAQVQYGNLLSLPFGNGMLYVEPVYVKSNQQQAYPLLQKVLLSYGDGGSFVVLADNLTDGIKQLVEQGEQAGAPSPPPSDDETPPSPTPTPTPTTPSVTPPPLTGEVAEAAQRVQAAIVELRAAQESGDFERYGRALQALDEATAAFEQAAASTPAATPTAAPTGSPSPGG</sequence>
<protein>
    <recommendedName>
        <fullName evidence="1">UPF0182 protein Strop_3729</fullName>
    </recommendedName>
</protein>
<reference key="1">
    <citation type="journal article" date="2007" name="Proc. Natl. Acad. Sci. U.S.A.">
        <title>Genome sequencing reveals complex secondary metabolome in the marine actinomycete Salinispora tropica.</title>
        <authorList>
            <person name="Udwary D.W."/>
            <person name="Zeigler L."/>
            <person name="Asolkar R.N."/>
            <person name="Singan V."/>
            <person name="Lapidus A."/>
            <person name="Fenical W."/>
            <person name="Jensen P.R."/>
            <person name="Moore B.S."/>
        </authorList>
    </citation>
    <scope>NUCLEOTIDE SEQUENCE [LARGE SCALE GENOMIC DNA]</scope>
    <source>
        <strain>ATCC BAA-916 / DSM 44818 / JCM 13857 / NBRC 105044 / CNB-440</strain>
    </source>
</reference>